<dbReference type="EC" id="2.1.1.-" evidence="1"/>
<dbReference type="EMBL" id="AM295007">
    <property type="protein sequence ID" value="CAM30898.1"/>
    <property type="molecule type" value="Genomic_DNA"/>
</dbReference>
<dbReference type="RefSeq" id="WP_002985957.1">
    <property type="nucleotide sequence ID" value="NC_009332.1"/>
</dbReference>
<dbReference type="SMR" id="A2RGB9"/>
<dbReference type="KEGG" id="spf:SpyM51577"/>
<dbReference type="HOGENOM" id="CLU_065341_0_2_9"/>
<dbReference type="GO" id="GO:0005829">
    <property type="term" value="C:cytosol"/>
    <property type="evidence" value="ECO:0007669"/>
    <property type="project" value="TreeGrafter"/>
</dbReference>
<dbReference type="GO" id="GO:0070043">
    <property type="term" value="F:rRNA (guanine-N7-)-methyltransferase activity"/>
    <property type="evidence" value="ECO:0007669"/>
    <property type="project" value="UniProtKB-UniRule"/>
</dbReference>
<dbReference type="CDD" id="cd02440">
    <property type="entry name" value="AdoMet_MTases"/>
    <property type="match status" value="1"/>
</dbReference>
<dbReference type="FunFam" id="3.40.50.150:FF:000041">
    <property type="entry name" value="Ribosomal RNA small subunit methyltransferase G"/>
    <property type="match status" value="1"/>
</dbReference>
<dbReference type="Gene3D" id="3.40.50.150">
    <property type="entry name" value="Vaccinia Virus protein VP39"/>
    <property type="match status" value="1"/>
</dbReference>
<dbReference type="HAMAP" id="MF_00074">
    <property type="entry name" value="16SrRNA_methyltr_G"/>
    <property type="match status" value="1"/>
</dbReference>
<dbReference type="InterPro" id="IPR003682">
    <property type="entry name" value="rRNA_ssu_MeTfrase_G"/>
</dbReference>
<dbReference type="InterPro" id="IPR029063">
    <property type="entry name" value="SAM-dependent_MTases_sf"/>
</dbReference>
<dbReference type="NCBIfam" id="TIGR00138">
    <property type="entry name" value="rsmG_gidB"/>
    <property type="match status" value="1"/>
</dbReference>
<dbReference type="PANTHER" id="PTHR31760">
    <property type="entry name" value="S-ADENOSYL-L-METHIONINE-DEPENDENT METHYLTRANSFERASES SUPERFAMILY PROTEIN"/>
    <property type="match status" value="1"/>
</dbReference>
<dbReference type="PANTHER" id="PTHR31760:SF0">
    <property type="entry name" value="S-ADENOSYL-L-METHIONINE-DEPENDENT METHYLTRANSFERASES SUPERFAMILY PROTEIN"/>
    <property type="match status" value="1"/>
</dbReference>
<dbReference type="Pfam" id="PF02527">
    <property type="entry name" value="GidB"/>
    <property type="match status" value="1"/>
</dbReference>
<dbReference type="PIRSF" id="PIRSF003078">
    <property type="entry name" value="GidB"/>
    <property type="match status" value="1"/>
</dbReference>
<dbReference type="SUPFAM" id="SSF53335">
    <property type="entry name" value="S-adenosyl-L-methionine-dependent methyltransferases"/>
    <property type="match status" value="1"/>
</dbReference>
<comment type="function">
    <text evidence="1">Specifically methylates the N7 position of a guanine in 16S rRNA.</text>
</comment>
<comment type="subcellular location">
    <subcellularLocation>
        <location evidence="1">Cytoplasm</location>
    </subcellularLocation>
</comment>
<comment type="similarity">
    <text evidence="1">Belongs to the methyltransferase superfamily. RNA methyltransferase RsmG family.</text>
</comment>
<keyword id="KW-0963">Cytoplasm</keyword>
<keyword id="KW-0489">Methyltransferase</keyword>
<keyword id="KW-0698">rRNA processing</keyword>
<keyword id="KW-0949">S-adenosyl-L-methionine</keyword>
<keyword id="KW-0808">Transferase</keyword>
<gene>
    <name evidence="1" type="primary">rsmG</name>
    <name type="ordered locus">SpyM51577</name>
</gene>
<name>RSMG_STRPG</name>
<reference key="1">
    <citation type="journal article" date="2007" name="J. Bacteriol.">
        <title>Complete genome of acute rheumatic fever-associated serotype M5 Streptococcus pyogenes strain Manfredo.</title>
        <authorList>
            <person name="Holden M.T.G."/>
            <person name="Scott A."/>
            <person name="Cherevach I."/>
            <person name="Chillingworth T."/>
            <person name="Churcher C."/>
            <person name="Cronin A."/>
            <person name="Dowd L."/>
            <person name="Feltwell T."/>
            <person name="Hamlin N."/>
            <person name="Holroyd S."/>
            <person name="Jagels K."/>
            <person name="Moule S."/>
            <person name="Mungall K."/>
            <person name="Quail M.A."/>
            <person name="Price C."/>
            <person name="Rabbinowitsch E."/>
            <person name="Sharp S."/>
            <person name="Skelton J."/>
            <person name="Whitehead S."/>
            <person name="Barrell B.G."/>
            <person name="Kehoe M."/>
            <person name="Parkhill J."/>
        </authorList>
    </citation>
    <scope>NUCLEOTIDE SEQUENCE [LARGE SCALE GENOMIC DNA]</scope>
    <source>
        <strain>Manfredo</strain>
    </source>
</reference>
<organism>
    <name type="scientific">Streptococcus pyogenes serotype M5 (strain Manfredo)</name>
    <dbReference type="NCBI Taxonomy" id="160491"/>
    <lineage>
        <taxon>Bacteria</taxon>
        <taxon>Bacillati</taxon>
        <taxon>Bacillota</taxon>
        <taxon>Bacilli</taxon>
        <taxon>Lactobacillales</taxon>
        <taxon>Streptococcaceae</taxon>
        <taxon>Streptococcus</taxon>
    </lineage>
</organism>
<proteinExistence type="inferred from homology"/>
<feature type="chain" id="PRO_1000010224" description="Ribosomal RNA small subunit methyltransferase G">
    <location>
        <begin position="1"/>
        <end position="237"/>
    </location>
</feature>
<feature type="binding site" evidence="1">
    <location>
        <position position="78"/>
    </location>
    <ligand>
        <name>S-adenosyl-L-methionine</name>
        <dbReference type="ChEBI" id="CHEBI:59789"/>
    </ligand>
</feature>
<feature type="binding site" evidence="1">
    <location>
        <position position="83"/>
    </location>
    <ligand>
        <name>S-adenosyl-L-methionine</name>
        <dbReference type="ChEBI" id="CHEBI:59789"/>
    </ligand>
</feature>
<feature type="binding site" evidence="1">
    <location>
        <begin position="129"/>
        <end position="130"/>
    </location>
    <ligand>
        <name>S-adenosyl-L-methionine</name>
        <dbReference type="ChEBI" id="CHEBI:59789"/>
    </ligand>
</feature>
<feature type="binding site" evidence="1">
    <location>
        <position position="148"/>
    </location>
    <ligand>
        <name>S-adenosyl-L-methionine</name>
        <dbReference type="ChEBI" id="CHEBI:59789"/>
    </ligand>
</feature>
<sequence>MTPQDFYRTLEEDGFSLSSKQKEQFDTYFKLLVEWNTKINLTAITEENEVYLKHFYDSIAPILQGFLANEPIKLLDIGAGAGFPSLPMKILFPNLEVTIIDSLNKRISFLTLLAQELGLENVHFFHGRAEDFGQDKAFRGQFDVVTARAVARMQVLSELTIPFLKIRGKLIALKAQAADQELEEAKNALCLLFGKVIKNHSYQLPNGDSRFITIVEKKKETPNKYPRKAGLPNKKPL</sequence>
<protein>
    <recommendedName>
        <fullName evidence="1">Ribosomal RNA small subunit methyltransferase G</fullName>
        <ecNumber evidence="1">2.1.1.-</ecNumber>
    </recommendedName>
    <alternativeName>
        <fullName evidence="1">16S rRNA 7-methylguanosine methyltransferase</fullName>
        <shortName evidence="1">16S rRNA m7G methyltransferase</shortName>
    </alternativeName>
</protein>
<accession>A2RGB9</accession>
<evidence type="ECO:0000255" key="1">
    <source>
        <dbReference type="HAMAP-Rule" id="MF_00074"/>
    </source>
</evidence>